<reference key="1">
    <citation type="journal article" date="2004" name="Nat. Biotechnol.">
        <title>The genome sequence of the capnophilic rumen bacterium Mannheimia succiniciproducens.</title>
        <authorList>
            <person name="Hong S.H."/>
            <person name="Kim J.S."/>
            <person name="Lee S.Y."/>
            <person name="In Y.H."/>
            <person name="Choi S.S."/>
            <person name="Rih J.-K."/>
            <person name="Kim C.H."/>
            <person name="Jeong H."/>
            <person name="Hur C.G."/>
            <person name="Kim J.J."/>
        </authorList>
    </citation>
    <scope>NUCLEOTIDE SEQUENCE [LARGE SCALE GENOMIC DNA]</scope>
    <source>
        <strain>KCTC 0769BP / MBEL55E</strain>
    </source>
</reference>
<organism>
    <name type="scientific">Mannheimia succiniciproducens (strain KCTC 0769BP / MBEL55E)</name>
    <dbReference type="NCBI Taxonomy" id="221988"/>
    <lineage>
        <taxon>Bacteria</taxon>
        <taxon>Pseudomonadati</taxon>
        <taxon>Pseudomonadota</taxon>
        <taxon>Gammaproteobacteria</taxon>
        <taxon>Pasteurellales</taxon>
        <taxon>Pasteurellaceae</taxon>
        <taxon>Basfia</taxon>
    </lineage>
</organism>
<proteinExistence type="inferred from homology"/>
<keyword id="KW-0997">Cell inner membrane</keyword>
<keyword id="KW-1003">Cell membrane</keyword>
<keyword id="KW-0472">Membrane</keyword>
<keyword id="KW-0808">Transferase</keyword>
<keyword id="KW-0812">Transmembrane</keyword>
<keyword id="KW-1133">Transmembrane helix</keyword>
<dbReference type="EC" id="2.5.1.145" evidence="1"/>
<dbReference type="EMBL" id="AE016827">
    <property type="protein sequence ID" value="AAU37013.1"/>
    <property type="molecule type" value="Genomic_DNA"/>
</dbReference>
<dbReference type="RefSeq" id="WP_011199588.1">
    <property type="nucleotide sequence ID" value="NC_006300.1"/>
</dbReference>
<dbReference type="SMR" id="Q65VJ7"/>
<dbReference type="STRING" id="221988.MS0406"/>
<dbReference type="KEGG" id="msu:MS0406"/>
<dbReference type="eggNOG" id="COG0682">
    <property type="taxonomic scope" value="Bacteria"/>
</dbReference>
<dbReference type="HOGENOM" id="CLU_013386_1_0_6"/>
<dbReference type="OrthoDB" id="871140at2"/>
<dbReference type="UniPathway" id="UPA00664"/>
<dbReference type="Proteomes" id="UP000000607">
    <property type="component" value="Chromosome"/>
</dbReference>
<dbReference type="GO" id="GO:0005886">
    <property type="term" value="C:plasma membrane"/>
    <property type="evidence" value="ECO:0007669"/>
    <property type="project" value="UniProtKB-SubCell"/>
</dbReference>
<dbReference type="GO" id="GO:0008961">
    <property type="term" value="F:phosphatidylglycerol-prolipoprotein diacylglyceryl transferase activity"/>
    <property type="evidence" value="ECO:0007669"/>
    <property type="project" value="UniProtKB-UniRule"/>
</dbReference>
<dbReference type="GO" id="GO:0042158">
    <property type="term" value="P:lipoprotein biosynthetic process"/>
    <property type="evidence" value="ECO:0007669"/>
    <property type="project" value="UniProtKB-UniRule"/>
</dbReference>
<dbReference type="HAMAP" id="MF_01147">
    <property type="entry name" value="Lgt"/>
    <property type="match status" value="1"/>
</dbReference>
<dbReference type="InterPro" id="IPR001640">
    <property type="entry name" value="Lgt"/>
</dbReference>
<dbReference type="NCBIfam" id="TIGR00544">
    <property type="entry name" value="lgt"/>
    <property type="match status" value="1"/>
</dbReference>
<dbReference type="PANTHER" id="PTHR30589:SF0">
    <property type="entry name" value="PHOSPHATIDYLGLYCEROL--PROLIPOPROTEIN DIACYLGLYCERYL TRANSFERASE"/>
    <property type="match status" value="1"/>
</dbReference>
<dbReference type="PANTHER" id="PTHR30589">
    <property type="entry name" value="PROLIPOPROTEIN DIACYLGLYCERYL TRANSFERASE"/>
    <property type="match status" value="1"/>
</dbReference>
<dbReference type="Pfam" id="PF01790">
    <property type="entry name" value="LGT"/>
    <property type="match status" value="1"/>
</dbReference>
<dbReference type="PROSITE" id="PS01311">
    <property type="entry name" value="LGT"/>
    <property type="match status" value="1"/>
</dbReference>
<protein>
    <recommendedName>
        <fullName evidence="1">Phosphatidylglycerol--prolipoprotein diacylglyceryl transferase</fullName>
        <ecNumber evidence="1">2.5.1.145</ecNumber>
    </recommendedName>
</protein>
<comment type="function">
    <text evidence="1">Catalyzes the transfer of the diacylglyceryl group from phosphatidylglycerol to the sulfhydryl group of the N-terminal cysteine of a prolipoprotein, the first step in the formation of mature lipoproteins.</text>
</comment>
<comment type="catalytic activity">
    <reaction evidence="1">
        <text>L-cysteinyl-[prolipoprotein] + a 1,2-diacyl-sn-glycero-3-phospho-(1'-sn-glycerol) = an S-1,2-diacyl-sn-glyceryl-L-cysteinyl-[prolipoprotein] + sn-glycerol 1-phosphate + H(+)</text>
        <dbReference type="Rhea" id="RHEA:56712"/>
        <dbReference type="Rhea" id="RHEA-COMP:14679"/>
        <dbReference type="Rhea" id="RHEA-COMP:14680"/>
        <dbReference type="ChEBI" id="CHEBI:15378"/>
        <dbReference type="ChEBI" id="CHEBI:29950"/>
        <dbReference type="ChEBI" id="CHEBI:57685"/>
        <dbReference type="ChEBI" id="CHEBI:64716"/>
        <dbReference type="ChEBI" id="CHEBI:140658"/>
        <dbReference type="EC" id="2.5.1.145"/>
    </reaction>
</comment>
<comment type="pathway">
    <text evidence="1">Protein modification; lipoprotein biosynthesis (diacylglyceryl transfer).</text>
</comment>
<comment type="subcellular location">
    <subcellularLocation>
        <location evidence="1">Cell inner membrane</location>
        <topology evidence="1">Multi-pass membrane protein</topology>
    </subcellularLocation>
</comment>
<comment type="similarity">
    <text evidence="1">Belongs to the Lgt family.</text>
</comment>
<accession>Q65VJ7</accession>
<sequence>MENQFLAFPQFDPIIFSLGPISLRWYGLMYLIGFIFARWLAVKRANRPDSGWTVEQVDNLLFNGFAGVFLGGRIGYVLFYQWDLFVQEPSYLFRVWEGGMSFHGGLIGVIVAMLVTAKLQKRNFWVVADFVAPLIPFGLGMGRIGNFINDELWGRVTDVPWAVLFPSGGYLPRHPSQLYEFVLEGIVLFCILNWFIRKPRPAGSVAGLFLLFYGLFRFIVEFFREPDAQLGLYFGQQISMGQILSTPMILLGALFIVLAYRRRSAVKN</sequence>
<feature type="chain" id="PRO_0000172629" description="Phosphatidylglycerol--prolipoprotein diacylglyceryl transferase">
    <location>
        <begin position="1"/>
        <end position="268"/>
    </location>
</feature>
<feature type="transmembrane region" description="Helical" evidence="1">
    <location>
        <begin position="14"/>
        <end position="34"/>
    </location>
</feature>
<feature type="transmembrane region" description="Helical" evidence="1">
    <location>
        <begin position="60"/>
        <end position="80"/>
    </location>
</feature>
<feature type="transmembrane region" description="Helical" evidence="1">
    <location>
        <begin position="95"/>
        <end position="115"/>
    </location>
</feature>
<feature type="transmembrane region" description="Helical" evidence="1">
    <location>
        <begin position="124"/>
        <end position="144"/>
    </location>
</feature>
<feature type="transmembrane region" description="Helical" evidence="1">
    <location>
        <begin position="176"/>
        <end position="196"/>
    </location>
</feature>
<feature type="transmembrane region" description="Helical" evidence="1">
    <location>
        <begin position="203"/>
        <end position="223"/>
    </location>
</feature>
<feature type="transmembrane region" description="Helical" evidence="1">
    <location>
        <begin position="238"/>
        <end position="258"/>
    </location>
</feature>
<feature type="binding site" evidence="1">
    <location>
        <position position="143"/>
    </location>
    <ligand>
        <name>a 1,2-diacyl-sn-glycero-3-phospho-(1'-sn-glycerol)</name>
        <dbReference type="ChEBI" id="CHEBI:64716"/>
    </ligand>
</feature>
<evidence type="ECO:0000255" key="1">
    <source>
        <dbReference type="HAMAP-Rule" id="MF_01147"/>
    </source>
</evidence>
<gene>
    <name evidence="1" type="primary">lgt</name>
    <name type="ordered locus">MS0406</name>
</gene>
<name>LGT_MANSM</name>